<comment type="induction">
    <text evidence="1">Expressed in the early phase of the viral replicative cycle.</text>
</comment>
<comment type="similarity">
    <text evidence="3">Belongs to the orthopoxvirus OPG052 family.</text>
</comment>
<organismHost>
    <name type="scientific">Cynomys gunnisoni</name>
    <name type="common">Gunnison's prairie dog</name>
    <name type="synonym">Spermophilus gunnisoni</name>
    <dbReference type="NCBI Taxonomy" id="45479"/>
</organismHost>
<organismHost>
    <name type="scientific">Cynomys leucurus</name>
    <name type="common">White-tailed prairie dog</name>
    <dbReference type="NCBI Taxonomy" id="99825"/>
</organismHost>
<organismHost>
    <name type="scientific">Cynomys ludovicianus</name>
    <name type="common">Black-tailed prairie dog</name>
    <dbReference type="NCBI Taxonomy" id="45480"/>
</organismHost>
<organismHost>
    <name type="scientific">Cynomys mexicanus</name>
    <name type="common">Mexican prairie dog</name>
    <dbReference type="NCBI Taxonomy" id="99826"/>
</organismHost>
<organismHost>
    <name type="scientific">Cynomys parvidens</name>
    <name type="common">Utah prairie dog</name>
    <dbReference type="NCBI Taxonomy" id="99827"/>
</organismHost>
<organismHost>
    <name type="scientific">Gliridae</name>
    <name type="common">dormice</name>
    <dbReference type="NCBI Taxonomy" id="30650"/>
</organismHost>
<organismHost>
    <name type="scientific">Heliosciurus ruwenzorii</name>
    <name type="common">Ruwenzori sun squirrel</name>
    <dbReference type="NCBI Taxonomy" id="226685"/>
</organismHost>
<organismHost>
    <name type="scientific">Homo sapiens</name>
    <name type="common">Human</name>
    <dbReference type="NCBI Taxonomy" id="9606"/>
</organismHost>
<organismHost>
    <name type="scientific">Mus musculus</name>
    <name type="common">Mouse</name>
    <dbReference type="NCBI Taxonomy" id="10090"/>
</organismHost>
<proteinExistence type="inferred from homology"/>
<reference key="1">
    <citation type="journal article" date="2022" name="J. Infect. Dis.">
        <title>Exportation of Monkeypox virus from the African continent.</title>
        <authorList>
            <person name="Mauldin M.R."/>
            <person name="McCollum A.M."/>
            <person name="Nakazawa Y.J."/>
            <person name="Mandra A."/>
            <person name="Whitehouse E.R."/>
            <person name="Davidson W."/>
            <person name="Zhao H."/>
            <person name="Gao J."/>
            <person name="Li Y."/>
            <person name="Doty J."/>
            <person name="Yinka-Ogunleye A."/>
            <person name="Akinpelu A."/>
            <person name="Aruna O."/>
            <person name="Naidoo D."/>
            <person name="Lewandowski K."/>
            <person name="Afrough B."/>
            <person name="Graham V."/>
            <person name="Aarons E."/>
            <person name="Hewson R."/>
            <person name="Vipond R."/>
            <person name="Dunning J."/>
            <person name="Chand M."/>
            <person name="Brown C."/>
            <person name="Cohen-Gihon I."/>
            <person name="Erez N."/>
            <person name="Shifman O."/>
            <person name="Israeli O."/>
            <person name="Sharon M."/>
            <person name="Schwartz E."/>
            <person name="Beth-Din A."/>
            <person name="Zvi A."/>
            <person name="Mak T.M."/>
            <person name="Ng Y.K."/>
            <person name="Cui L."/>
            <person name="Lin R.T.P."/>
            <person name="Olson V.A."/>
            <person name="Brooks T."/>
            <person name="Paran N."/>
            <person name="Ihekweazu C."/>
            <person name="Reynolds M.G."/>
        </authorList>
    </citation>
    <scope>NUCLEOTIDE SEQUENCE [LARGE SCALE GENOMIC DNA]</scope>
    <source>
        <strain>MPXV-M5312_HM12_Rivers</strain>
    </source>
</reference>
<name>PG052_MONPV</name>
<accession>A0A7H0DN25</accession>
<feature type="chain" id="PRO_0000457640" description="Protein OPG053">
    <location>
        <begin position="1"/>
        <end position="64"/>
    </location>
</feature>
<feature type="region of interest" description="Disordered" evidence="2">
    <location>
        <begin position="1"/>
        <end position="28"/>
    </location>
</feature>
<feature type="compositionally biased region" description="Basic residues" evidence="2">
    <location>
        <begin position="1"/>
        <end position="10"/>
    </location>
</feature>
<feature type="compositionally biased region" description="Basic and acidic residues" evidence="2">
    <location>
        <begin position="11"/>
        <end position="20"/>
    </location>
</feature>
<dbReference type="EMBL" id="MT903340">
    <property type="protein sequence ID" value="QNP12908.1"/>
    <property type="molecule type" value="Genomic_DNA"/>
</dbReference>
<dbReference type="RefSeq" id="NP_536467.1">
    <property type="nucleotide sequence ID" value="NC_003310.1"/>
</dbReference>
<dbReference type="RefSeq" id="YP_010377035.1">
    <property type="nucleotide sequence ID" value="NC_063383.1"/>
</dbReference>
<dbReference type="SMR" id="A0A7H0DN25"/>
<dbReference type="GeneID" id="72551448"/>
<dbReference type="GeneID" id="928945"/>
<dbReference type="KEGG" id="vg:928945"/>
<dbReference type="Proteomes" id="UP000516359">
    <property type="component" value="Genome"/>
</dbReference>
<dbReference type="InterPro" id="IPR008726">
    <property type="entry name" value="Poxvirus_F8"/>
</dbReference>
<dbReference type="Pfam" id="PF05886">
    <property type="entry name" value="Orthopox_F8"/>
    <property type="match status" value="1"/>
</dbReference>
<keyword id="KW-0244">Early protein</keyword>
<keyword id="KW-1185">Reference proteome</keyword>
<evidence type="ECO:0000250" key="1">
    <source>
        <dbReference type="UniProtKB" id="P24360"/>
    </source>
</evidence>
<evidence type="ECO:0000256" key="2">
    <source>
        <dbReference type="SAM" id="MobiDB-lite"/>
    </source>
</evidence>
<evidence type="ECO:0000305" key="3"/>
<protein>
    <recommendedName>
        <fullName>Protein OPG053</fullName>
    </recommendedName>
</protein>
<organism>
    <name type="scientific">Monkeypox virus</name>
    <dbReference type="NCBI Taxonomy" id="10244"/>
    <lineage>
        <taxon>Viruses</taxon>
        <taxon>Varidnaviria</taxon>
        <taxon>Bamfordvirae</taxon>
        <taxon>Nucleocytoviricota</taxon>
        <taxon>Pokkesviricetes</taxon>
        <taxon>Chitovirales</taxon>
        <taxon>Poxviridae</taxon>
        <taxon>Chordopoxvirinae</taxon>
        <taxon>Orthopoxvirus</taxon>
    </lineage>
</organism>
<sequence>MEGSKRKHDSRRLQEQEQPRPRTPPSYEEIAKYGHSFNVKRFTNEEMCLKNDYPRIISYNPPPK</sequence>
<gene>
    <name type="primary">OPG052</name>
    <name type="ORF">MPXVgp040</name>
</gene>